<comment type="similarity">
    <text evidence="1">Belongs to the universal ribosomal protein uS9 family.</text>
</comment>
<comment type="sequence caution" evidence="3">
    <conflict type="erroneous initiation">
        <sequence resource="EMBL-CDS" id="BAB96001"/>
    </conflict>
</comment>
<accession>P66647</accession>
<accession>Q99S52</accession>
<sequence length="130" mass="14616">MAQVEYRGTGRRKNSVARVRLVPGEGNITVNNRDVREYLPFESLILDLNQPFDVTETKGNYDVLVNVHGGGFTGQAQAIRHGIARALLEADPEYRGSLKRAGLLTRDPRMKERKKPGLKAARRSPQFSKR</sequence>
<organism>
    <name type="scientific">Staphylococcus aureus (strain MW2)</name>
    <dbReference type="NCBI Taxonomy" id="196620"/>
    <lineage>
        <taxon>Bacteria</taxon>
        <taxon>Bacillati</taxon>
        <taxon>Bacillota</taxon>
        <taxon>Bacilli</taxon>
        <taxon>Bacillales</taxon>
        <taxon>Staphylococcaceae</taxon>
        <taxon>Staphylococcus</taxon>
    </lineage>
</organism>
<proteinExistence type="evidence at protein level"/>
<feature type="chain" id="PRO_0000111409" description="Small ribosomal subunit protein uS9">
    <location>
        <begin position="1"/>
        <end position="130"/>
    </location>
</feature>
<feature type="region of interest" description="Disordered" evidence="2">
    <location>
        <begin position="99"/>
        <end position="130"/>
    </location>
</feature>
<feature type="compositionally biased region" description="Basic residues" evidence="2">
    <location>
        <begin position="111"/>
        <end position="130"/>
    </location>
</feature>
<protein>
    <recommendedName>
        <fullName evidence="1">Small ribosomal subunit protein uS9</fullName>
    </recommendedName>
    <alternativeName>
        <fullName evidence="3">30S ribosomal protein S9</fullName>
    </alternativeName>
</protein>
<gene>
    <name evidence="1" type="primary">rpsI</name>
    <name type="ordered locus">MW2136</name>
</gene>
<name>RS9_STAAW</name>
<dbReference type="EMBL" id="BA000033">
    <property type="protein sequence ID" value="BAB96001.1"/>
    <property type="status" value="ALT_INIT"/>
    <property type="molecule type" value="Genomic_DNA"/>
</dbReference>
<dbReference type="RefSeq" id="WP_001790547.1">
    <property type="nucleotide sequence ID" value="NC_003923.1"/>
</dbReference>
<dbReference type="PDB" id="8Y38">
    <property type="method" value="EM"/>
    <property type="resolution" value="2.58 A"/>
    <property type="chains" value="i=1-130"/>
</dbReference>
<dbReference type="PDB" id="8Y39">
    <property type="method" value="EM"/>
    <property type="resolution" value="3.60 A"/>
    <property type="chains" value="i=1-130"/>
</dbReference>
<dbReference type="PDBsum" id="8Y38"/>
<dbReference type="PDBsum" id="8Y39"/>
<dbReference type="EMDB" id="EMD-38875"/>
<dbReference type="EMDB" id="EMD-38876"/>
<dbReference type="SMR" id="P66647"/>
<dbReference type="GeneID" id="98346529"/>
<dbReference type="KEGG" id="sam:MW2136"/>
<dbReference type="HOGENOM" id="CLU_046483_2_1_9"/>
<dbReference type="GO" id="GO:0022627">
    <property type="term" value="C:cytosolic small ribosomal subunit"/>
    <property type="evidence" value="ECO:0007669"/>
    <property type="project" value="TreeGrafter"/>
</dbReference>
<dbReference type="GO" id="GO:0003723">
    <property type="term" value="F:RNA binding"/>
    <property type="evidence" value="ECO:0007669"/>
    <property type="project" value="TreeGrafter"/>
</dbReference>
<dbReference type="GO" id="GO:0003735">
    <property type="term" value="F:structural constituent of ribosome"/>
    <property type="evidence" value="ECO:0007669"/>
    <property type="project" value="InterPro"/>
</dbReference>
<dbReference type="GO" id="GO:0006412">
    <property type="term" value="P:translation"/>
    <property type="evidence" value="ECO:0007669"/>
    <property type="project" value="UniProtKB-UniRule"/>
</dbReference>
<dbReference type="FunFam" id="3.30.230.10:FF:000001">
    <property type="entry name" value="30S ribosomal protein S9"/>
    <property type="match status" value="1"/>
</dbReference>
<dbReference type="Gene3D" id="3.30.230.10">
    <property type="match status" value="1"/>
</dbReference>
<dbReference type="HAMAP" id="MF_00532_B">
    <property type="entry name" value="Ribosomal_uS9_B"/>
    <property type="match status" value="1"/>
</dbReference>
<dbReference type="InterPro" id="IPR020568">
    <property type="entry name" value="Ribosomal_Su5_D2-typ_SF"/>
</dbReference>
<dbReference type="InterPro" id="IPR000754">
    <property type="entry name" value="Ribosomal_uS9"/>
</dbReference>
<dbReference type="InterPro" id="IPR023035">
    <property type="entry name" value="Ribosomal_uS9_bac/plastid"/>
</dbReference>
<dbReference type="InterPro" id="IPR020574">
    <property type="entry name" value="Ribosomal_uS9_CS"/>
</dbReference>
<dbReference type="InterPro" id="IPR014721">
    <property type="entry name" value="Ribsml_uS5_D2-typ_fold_subgr"/>
</dbReference>
<dbReference type="NCBIfam" id="NF001099">
    <property type="entry name" value="PRK00132.1"/>
    <property type="match status" value="1"/>
</dbReference>
<dbReference type="PANTHER" id="PTHR21569">
    <property type="entry name" value="RIBOSOMAL PROTEIN S9"/>
    <property type="match status" value="1"/>
</dbReference>
<dbReference type="PANTHER" id="PTHR21569:SF1">
    <property type="entry name" value="SMALL RIBOSOMAL SUBUNIT PROTEIN US9M"/>
    <property type="match status" value="1"/>
</dbReference>
<dbReference type="Pfam" id="PF00380">
    <property type="entry name" value="Ribosomal_S9"/>
    <property type="match status" value="1"/>
</dbReference>
<dbReference type="SUPFAM" id="SSF54211">
    <property type="entry name" value="Ribosomal protein S5 domain 2-like"/>
    <property type="match status" value="1"/>
</dbReference>
<dbReference type="PROSITE" id="PS00360">
    <property type="entry name" value="RIBOSOMAL_S9"/>
    <property type="match status" value="1"/>
</dbReference>
<evidence type="ECO:0000255" key="1">
    <source>
        <dbReference type="HAMAP-Rule" id="MF_00532"/>
    </source>
</evidence>
<evidence type="ECO:0000256" key="2">
    <source>
        <dbReference type="SAM" id="MobiDB-lite"/>
    </source>
</evidence>
<evidence type="ECO:0000305" key="3"/>
<reference key="1">
    <citation type="journal article" date="2002" name="Lancet">
        <title>Genome and virulence determinants of high virulence community-acquired MRSA.</title>
        <authorList>
            <person name="Baba T."/>
            <person name="Takeuchi F."/>
            <person name="Kuroda M."/>
            <person name="Yuzawa H."/>
            <person name="Aoki K."/>
            <person name="Oguchi A."/>
            <person name="Nagai Y."/>
            <person name="Iwama N."/>
            <person name="Asano K."/>
            <person name="Naimi T."/>
            <person name="Kuroda H."/>
            <person name="Cui L."/>
            <person name="Yamamoto K."/>
            <person name="Hiramatsu K."/>
        </authorList>
    </citation>
    <scope>NUCLEOTIDE SEQUENCE [LARGE SCALE GENOMIC DNA]</scope>
    <source>
        <strain>MW2</strain>
    </source>
</reference>
<keyword id="KW-0002">3D-structure</keyword>
<keyword id="KW-0687">Ribonucleoprotein</keyword>
<keyword id="KW-0689">Ribosomal protein</keyword>